<name>ATF31_SCHPO</name>
<accession>Q09771</accession>
<feature type="chain" id="PRO_0000076539" description="Transcription factor atf31">
    <location>
        <begin position="1"/>
        <end position="209"/>
    </location>
</feature>
<feature type="domain" description="bZIP" evidence="1">
    <location>
        <begin position="121"/>
        <end position="184"/>
    </location>
</feature>
<feature type="region of interest" description="Disordered" evidence="2">
    <location>
        <begin position="90"/>
        <end position="133"/>
    </location>
</feature>
<feature type="region of interest" description="Basic motif" evidence="1">
    <location>
        <begin position="123"/>
        <end position="161"/>
    </location>
</feature>
<feature type="region of interest" description="Leucine-zipper" evidence="1">
    <location>
        <begin position="163"/>
        <end position="177"/>
    </location>
</feature>
<feature type="compositionally biased region" description="Polar residues" evidence="2">
    <location>
        <begin position="90"/>
        <end position="103"/>
    </location>
</feature>
<organism>
    <name type="scientific">Schizosaccharomyces pombe (strain 972 / ATCC 24843)</name>
    <name type="common">Fission yeast</name>
    <dbReference type="NCBI Taxonomy" id="284812"/>
    <lineage>
        <taxon>Eukaryota</taxon>
        <taxon>Fungi</taxon>
        <taxon>Dikarya</taxon>
        <taxon>Ascomycota</taxon>
        <taxon>Taphrinomycotina</taxon>
        <taxon>Schizosaccharomycetes</taxon>
        <taxon>Schizosaccharomycetales</taxon>
        <taxon>Schizosaccharomycetaceae</taxon>
        <taxon>Schizosaccharomyces</taxon>
    </lineage>
</organism>
<comment type="subcellular location">
    <subcellularLocation>
        <location evidence="1">Nucleus</location>
    </subcellularLocation>
</comment>
<comment type="similarity">
    <text evidence="3">Belongs to the bZIP family.</text>
</comment>
<evidence type="ECO:0000255" key="1">
    <source>
        <dbReference type="PROSITE-ProRule" id="PRU00978"/>
    </source>
</evidence>
<evidence type="ECO:0000256" key="2">
    <source>
        <dbReference type="SAM" id="MobiDB-lite"/>
    </source>
</evidence>
<evidence type="ECO:0000305" key="3"/>
<reference key="1">
    <citation type="journal article" date="1999" name="Mol. Gen. Genet.">
        <title>Isolation of multicopy suppressors of the calcium sensitivity of a mutant lacking the bZIP transcription factor Atf1 in fission yeast.</title>
        <authorList>
            <person name="Ohmiya R."/>
            <person name="Kato C."/>
            <person name="Yamada H."/>
            <person name="Aiba H."/>
            <person name="Mizuno T."/>
        </authorList>
    </citation>
    <scope>NUCLEOTIDE SEQUENCE [GENOMIC DNA]</scope>
</reference>
<reference key="2">
    <citation type="journal article" date="2002" name="Nature">
        <title>The genome sequence of Schizosaccharomyces pombe.</title>
        <authorList>
            <person name="Wood V."/>
            <person name="Gwilliam R."/>
            <person name="Rajandream M.A."/>
            <person name="Lyne M.H."/>
            <person name="Lyne R."/>
            <person name="Stewart A."/>
            <person name="Sgouros J.G."/>
            <person name="Peat N."/>
            <person name="Hayles J."/>
            <person name="Baker S.G."/>
            <person name="Basham D."/>
            <person name="Bowman S."/>
            <person name="Brooks K."/>
            <person name="Brown D."/>
            <person name="Brown S."/>
            <person name="Chillingworth T."/>
            <person name="Churcher C.M."/>
            <person name="Collins M."/>
            <person name="Connor R."/>
            <person name="Cronin A."/>
            <person name="Davis P."/>
            <person name="Feltwell T."/>
            <person name="Fraser A."/>
            <person name="Gentles S."/>
            <person name="Goble A."/>
            <person name="Hamlin N."/>
            <person name="Harris D.E."/>
            <person name="Hidalgo J."/>
            <person name="Hodgson G."/>
            <person name="Holroyd S."/>
            <person name="Hornsby T."/>
            <person name="Howarth S."/>
            <person name="Huckle E.J."/>
            <person name="Hunt S."/>
            <person name="Jagels K."/>
            <person name="James K.D."/>
            <person name="Jones L."/>
            <person name="Jones M."/>
            <person name="Leather S."/>
            <person name="McDonald S."/>
            <person name="McLean J."/>
            <person name="Mooney P."/>
            <person name="Moule S."/>
            <person name="Mungall K.L."/>
            <person name="Murphy L.D."/>
            <person name="Niblett D."/>
            <person name="Odell C."/>
            <person name="Oliver K."/>
            <person name="O'Neil S."/>
            <person name="Pearson D."/>
            <person name="Quail M.A."/>
            <person name="Rabbinowitsch E."/>
            <person name="Rutherford K.M."/>
            <person name="Rutter S."/>
            <person name="Saunders D."/>
            <person name="Seeger K."/>
            <person name="Sharp S."/>
            <person name="Skelton J."/>
            <person name="Simmonds M.N."/>
            <person name="Squares R."/>
            <person name="Squares S."/>
            <person name="Stevens K."/>
            <person name="Taylor K."/>
            <person name="Taylor R.G."/>
            <person name="Tivey A."/>
            <person name="Walsh S.V."/>
            <person name="Warren T."/>
            <person name="Whitehead S."/>
            <person name="Woodward J.R."/>
            <person name="Volckaert G."/>
            <person name="Aert R."/>
            <person name="Robben J."/>
            <person name="Grymonprez B."/>
            <person name="Weltjens I."/>
            <person name="Vanstreels E."/>
            <person name="Rieger M."/>
            <person name="Schaefer M."/>
            <person name="Mueller-Auer S."/>
            <person name="Gabel C."/>
            <person name="Fuchs M."/>
            <person name="Duesterhoeft A."/>
            <person name="Fritzc C."/>
            <person name="Holzer E."/>
            <person name="Moestl D."/>
            <person name="Hilbert H."/>
            <person name="Borzym K."/>
            <person name="Langer I."/>
            <person name="Beck A."/>
            <person name="Lehrach H."/>
            <person name="Reinhardt R."/>
            <person name="Pohl T.M."/>
            <person name="Eger P."/>
            <person name="Zimmermann W."/>
            <person name="Wedler H."/>
            <person name="Wambutt R."/>
            <person name="Purnelle B."/>
            <person name="Goffeau A."/>
            <person name="Cadieu E."/>
            <person name="Dreano S."/>
            <person name="Gloux S."/>
            <person name="Lelaure V."/>
            <person name="Mottier S."/>
            <person name="Galibert F."/>
            <person name="Aves S.J."/>
            <person name="Xiang Z."/>
            <person name="Hunt C."/>
            <person name="Moore K."/>
            <person name="Hurst S.M."/>
            <person name="Lucas M."/>
            <person name="Rochet M."/>
            <person name="Gaillardin C."/>
            <person name="Tallada V.A."/>
            <person name="Garzon A."/>
            <person name="Thode G."/>
            <person name="Daga R.R."/>
            <person name="Cruzado L."/>
            <person name="Jimenez J."/>
            <person name="Sanchez M."/>
            <person name="del Rey F."/>
            <person name="Benito J."/>
            <person name="Dominguez A."/>
            <person name="Revuelta J.L."/>
            <person name="Moreno S."/>
            <person name="Armstrong J."/>
            <person name="Forsburg S.L."/>
            <person name="Cerutti L."/>
            <person name="Lowe T."/>
            <person name="McCombie W.R."/>
            <person name="Paulsen I."/>
            <person name="Potashkin J."/>
            <person name="Shpakovski G.V."/>
            <person name="Ussery D."/>
            <person name="Barrell B.G."/>
            <person name="Nurse P."/>
        </authorList>
    </citation>
    <scope>NUCLEOTIDE SEQUENCE [LARGE SCALE GENOMIC DNA]</scope>
    <source>
        <strain>972 / ATCC 24843</strain>
    </source>
</reference>
<sequence>MTYETNTPTEESIIPKHEDGEEYNSIYLSRFEKDISISQTLDFSQFMQTQILLTAKRKALELGDDRSPINNDPYNIRRSDFDELSEYTASKSPSIISEASHNSPSRELDDSGDENTSKLTGTKQSMLKARNRQAAQKCRIKKKKYLQTLQDQVNYYTSENKELLQSANDLREEIIKLRTLVFAHRDCPVSKACSKALFLMGKEKPLTPP</sequence>
<dbReference type="EMBL" id="CU329670">
    <property type="protein sequence ID" value="CAA91067.1"/>
    <property type="molecule type" value="Genomic_DNA"/>
</dbReference>
<dbReference type="PIR" id="S62417">
    <property type="entry name" value="S62417"/>
</dbReference>
<dbReference type="RefSeq" id="NP_593039.1">
    <property type="nucleotide sequence ID" value="NM_001018438.2"/>
</dbReference>
<dbReference type="SMR" id="Q09771"/>
<dbReference type="BioGRID" id="278350">
    <property type="interactions" value="11"/>
</dbReference>
<dbReference type="STRING" id="284812.Q09771"/>
<dbReference type="SwissPalm" id="Q09771"/>
<dbReference type="PaxDb" id="4896-SPAC22F3.02.1"/>
<dbReference type="EnsemblFungi" id="SPAC22F3.02.1">
    <property type="protein sequence ID" value="SPAC22F3.02.1:pep"/>
    <property type="gene ID" value="SPAC22F3.02"/>
</dbReference>
<dbReference type="GeneID" id="2541860"/>
<dbReference type="KEGG" id="spo:2541860"/>
<dbReference type="PomBase" id="SPAC22F3.02">
    <property type="gene designation" value="atf31"/>
</dbReference>
<dbReference type="VEuPathDB" id="FungiDB:SPAC22F3.02"/>
<dbReference type="eggNOG" id="KOG1414">
    <property type="taxonomic scope" value="Eukaryota"/>
</dbReference>
<dbReference type="HOGENOM" id="CLU_1316082_0_0_1"/>
<dbReference type="InParanoid" id="Q09771"/>
<dbReference type="PhylomeDB" id="Q09771"/>
<dbReference type="PRO" id="PR:Q09771"/>
<dbReference type="Proteomes" id="UP000002485">
    <property type="component" value="Chromosome I"/>
</dbReference>
<dbReference type="GO" id="GO:0005634">
    <property type="term" value="C:nucleus"/>
    <property type="evidence" value="ECO:0007005"/>
    <property type="project" value="PomBase"/>
</dbReference>
<dbReference type="GO" id="GO:0000981">
    <property type="term" value="F:DNA-binding transcription factor activity, RNA polymerase II-specific"/>
    <property type="evidence" value="ECO:0000315"/>
    <property type="project" value="PomBase"/>
</dbReference>
<dbReference type="GO" id="GO:0000978">
    <property type="term" value="F:RNA polymerase II cis-regulatory region sequence-specific DNA binding"/>
    <property type="evidence" value="ECO:0000269"/>
    <property type="project" value="PomBase"/>
</dbReference>
<dbReference type="GO" id="GO:0006357">
    <property type="term" value="P:regulation of transcription by RNA polymerase II"/>
    <property type="evidence" value="ECO:0000315"/>
    <property type="project" value="PomBase"/>
</dbReference>
<dbReference type="CDD" id="cd14687">
    <property type="entry name" value="bZIP_ATF2"/>
    <property type="match status" value="1"/>
</dbReference>
<dbReference type="FunFam" id="1.20.5.170:FF:000053">
    <property type="entry name" value="BZIP transcription factor AtfA"/>
    <property type="match status" value="1"/>
</dbReference>
<dbReference type="Gene3D" id="1.20.5.170">
    <property type="match status" value="1"/>
</dbReference>
<dbReference type="InterPro" id="IPR004827">
    <property type="entry name" value="bZIP"/>
</dbReference>
<dbReference type="InterPro" id="IPR046347">
    <property type="entry name" value="bZIP_sf"/>
</dbReference>
<dbReference type="InterPro" id="IPR051027">
    <property type="entry name" value="bZIP_transcription_factors"/>
</dbReference>
<dbReference type="InterPro" id="IPR002112">
    <property type="entry name" value="Leuzip_Jun"/>
</dbReference>
<dbReference type="PANTHER" id="PTHR19304">
    <property type="entry name" value="CYCLIC-AMP RESPONSE ELEMENT BINDING PROTEIN"/>
    <property type="match status" value="1"/>
</dbReference>
<dbReference type="Pfam" id="PF00170">
    <property type="entry name" value="bZIP_1"/>
    <property type="match status" value="1"/>
</dbReference>
<dbReference type="PRINTS" id="PR00043">
    <property type="entry name" value="LEUZIPPRJUN"/>
</dbReference>
<dbReference type="SMART" id="SM00338">
    <property type="entry name" value="BRLZ"/>
    <property type="match status" value="1"/>
</dbReference>
<dbReference type="SUPFAM" id="SSF57959">
    <property type="entry name" value="Leucine zipper domain"/>
    <property type="match status" value="1"/>
</dbReference>
<dbReference type="PROSITE" id="PS50217">
    <property type="entry name" value="BZIP"/>
    <property type="match status" value="1"/>
</dbReference>
<dbReference type="PROSITE" id="PS00036">
    <property type="entry name" value="BZIP_BASIC"/>
    <property type="match status" value="1"/>
</dbReference>
<protein>
    <recommendedName>
        <fullName>Transcription factor atf31</fullName>
    </recommendedName>
</protein>
<gene>
    <name type="primary">atf31</name>
    <name type="ORF">SPAC22F3.02</name>
</gene>
<keyword id="KW-0238">DNA-binding</keyword>
<keyword id="KW-0539">Nucleus</keyword>
<keyword id="KW-1185">Reference proteome</keyword>
<keyword id="KW-0804">Transcription</keyword>
<keyword id="KW-0805">Transcription regulation</keyword>
<proteinExistence type="inferred from homology"/>